<proteinExistence type="inferred from homology"/>
<reference key="1">
    <citation type="journal article" date="2002" name="Nature">
        <title>The genome sequence of Schizosaccharomyces pombe.</title>
        <authorList>
            <person name="Wood V."/>
            <person name="Gwilliam R."/>
            <person name="Rajandream M.A."/>
            <person name="Lyne M.H."/>
            <person name="Lyne R."/>
            <person name="Stewart A."/>
            <person name="Sgouros J.G."/>
            <person name="Peat N."/>
            <person name="Hayles J."/>
            <person name="Baker S.G."/>
            <person name="Basham D."/>
            <person name="Bowman S."/>
            <person name="Brooks K."/>
            <person name="Brown D."/>
            <person name="Brown S."/>
            <person name="Chillingworth T."/>
            <person name="Churcher C.M."/>
            <person name="Collins M."/>
            <person name="Connor R."/>
            <person name="Cronin A."/>
            <person name="Davis P."/>
            <person name="Feltwell T."/>
            <person name="Fraser A."/>
            <person name="Gentles S."/>
            <person name="Goble A."/>
            <person name="Hamlin N."/>
            <person name="Harris D.E."/>
            <person name="Hidalgo J."/>
            <person name="Hodgson G."/>
            <person name="Holroyd S."/>
            <person name="Hornsby T."/>
            <person name="Howarth S."/>
            <person name="Huckle E.J."/>
            <person name="Hunt S."/>
            <person name="Jagels K."/>
            <person name="James K.D."/>
            <person name="Jones L."/>
            <person name="Jones M."/>
            <person name="Leather S."/>
            <person name="McDonald S."/>
            <person name="McLean J."/>
            <person name="Mooney P."/>
            <person name="Moule S."/>
            <person name="Mungall K.L."/>
            <person name="Murphy L.D."/>
            <person name="Niblett D."/>
            <person name="Odell C."/>
            <person name="Oliver K."/>
            <person name="O'Neil S."/>
            <person name="Pearson D."/>
            <person name="Quail M.A."/>
            <person name="Rabbinowitsch E."/>
            <person name="Rutherford K.M."/>
            <person name="Rutter S."/>
            <person name="Saunders D."/>
            <person name="Seeger K."/>
            <person name="Sharp S."/>
            <person name="Skelton J."/>
            <person name="Simmonds M.N."/>
            <person name="Squares R."/>
            <person name="Squares S."/>
            <person name="Stevens K."/>
            <person name="Taylor K."/>
            <person name="Taylor R.G."/>
            <person name="Tivey A."/>
            <person name="Walsh S.V."/>
            <person name="Warren T."/>
            <person name="Whitehead S."/>
            <person name="Woodward J.R."/>
            <person name="Volckaert G."/>
            <person name="Aert R."/>
            <person name="Robben J."/>
            <person name="Grymonprez B."/>
            <person name="Weltjens I."/>
            <person name="Vanstreels E."/>
            <person name="Rieger M."/>
            <person name="Schaefer M."/>
            <person name="Mueller-Auer S."/>
            <person name="Gabel C."/>
            <person name="Fuchs M."/>
            <person name="Duesterhoeft A."/>
            <person name="Fritzc C."/>
            <person name="Holzer E."/>
            <person name="Moestl D."/>
            <person name="Hilbert H."/>
            <person name="Borzym K."/>
            <person name="Langer I."/>
            <person name="Beck A."/>
            <person name="Lehrach H."/>
            <person name="Reinhardt R."/>
            <person name="Pohl T.M."/>
            <person name="Eger P."/>
            <person name="Zimmermann W."/>
            <person name="Wedler H."/>
            <person name="Wambutt R."/>
            <person name="Purnelle B."/>
            <person name="Goffeau A."/>
            <person name="Cadieu E."/>
            <person name="Dreano S."/>
            <person name="Gloux S."/>
            <person name="Lelaure V."/>
            <person name="Mottier S."/>
            <person name="Galibert F."/>
            <person name="Aves S.J."/>
            <person name="Xiang Z."/>
            <person name="Hunt C."/>
            <person name="Moore K."/>
            <person name="Hurst S.M."/>
            <person name="Lucas M."/>
            <person name="Rochet M."/>
            <person name="Gaillardin C."/>
            <person name="Tallada V.A."/>
            <person name="Garzon A."/>
            <person name="Thode G."/>
            <person name="Daga R.R."/>
            <person name="Cruzado L."/>
            <person name="Jimenez J."/>
            <person name="Sanchez M."/>
            <person name="del Rey F."/>
            <person name="Benito J."/>
            <person name="Dominguez A."/>
            <person name="Revuelta J.L."/>
            <person name="Moreno S."/>
            <person name="Armstrong J."/>
            <person name="Forsburg S.L."/>
            <person name="Cerutti L."/>
            <person name="Lowe T."/>
            <person name="McCombie W.R."/>
            <person name="Paulsen I."/>
            <person name="Potashkin J."/>
            <person name="Shpakovski G.V."/>
            <person name="Ussery D."/>
            <person name="Barrell B.G."/>
            <person name="Nurse P."/>
        </authorList>
    </citation>
    <scope>NUCLEOTIDE SEQUENCE [LARGE SCALE GENOMIC DNA]</scope>
    <source>
        <strain>972 / ATCC 24843</strain>
    </source>
</reference>
<keyword id="KW-1003">Cell membrane</keyword>
<keyword id="KW-0325">Glycoprotein</keyword>
<keyword id="KW-0333">Golgi apparatus</keyword>
<keyword id="KW-0336">GPI-anchor</keyword>
<keyword id="KW-0449">Lipoprotein</keyword>
<keyword id="KW-0472">Membrane</keyword>
<keyword id="KW-1185">Reference proteome</keyword>
<keyword id="KW-0732">Signal</keyword>
<protein>
    <recommendedName>
        <fullName>UPF0619 GPI-anchored membrane protein C1322.10</fullName>
    </recommendedName>
</protein>
<sequence length="262" mass="25998">MLARVGTTLFFLANALAAYAVSVTSPTRDTTWQSGQVNTVTWSSVSTDPEEMVIMLVNNAHYPNQNFNLGTVQSSAGSLDTDISISSDLPTDGWQIYFNGATSQNQGSLAQSEQFDFEGSDSTLAASTISGGIYSSTSASSTSSSTATPSSSSTTSSSSSSSSSTPISSSITSSISSSASSSVSSSSASSSGSISSADAKTVSASSNSTISGFSTSTTSASSSAAGNSSSSSYTSYSGAVSNGVAQLSVAACMGIAALMLIA</sequence>
<gene>
    <name type="ORF">SPCC1322.10</name>
</gene>
<name>YCDA_SCHPO</name>
<accession>O94549</accession>
<comment type="subcellular location">
    <subcellularLocation>
        <location>Golgi apparatus membrane</location>
        <topology>Lipid-anchor</topology>
        <topology>GPI-anchor</topology>
    </subcellularLocation>
    <subcellularLocation>
        <location evidence="3">Cell membrane</location>
        <topology evidence="3">Lipid-anchor</topology>
        <topology evidence="3">GPI-anchor</topology>
    </subcellularLocation>
</comment>
<comment type="similarity">
    <text evidence="3">Belongs to the UPF0619 family.</text>
</comment>
<dbReference type="EMBL" id="CU329672">
    <property type="protein sequence ID" value="CAA22863.1"/>
    <property type="molecule type" value="Genomic_DNA"/>
</dbReference>
<dbReference type="PIR" id="T40941">
    <property type="entry name" value="T40941"/>
</dbReference>
<dbReference type="BioGRID" id="275545">
    <property type="interactions" value="3"/>
</dbReference>
<dbReference type="PaxDb" id="4896-SPCC1322.10.1"/>
<dbReference type="EnsemblFungi" id="SPCC1322.10.1">
    <property type="protein sequence ID" value="SPCC1322.10.1:pep"/>
    <property type="gene ID" value="SPCC1322.10"/>
</dbReference>
<dbReference type="KEGG" id="spo:2538971"/>
<dbReference type="PomBase" id="SPCC1322.10"/>
<dbReference type="VEuPathDB" id="FungiDB:SPCC1322.10"/>
<dbReference type="HOGENOM" id="CLU_1008877_0_0_1"/>
<dbReference type="InParanoid" id="O94549"/>
<dbReference type="OMA" id="SFDIYLV"/>
<dbReference type="PRO" id="PR:O94549"/>
<dbReference type="Proteomes" id="UP000002485">
    <property type="component" value="Chromosome III"/>
</dbReference>
<dbReference type="GO" id="GO:0009897">
    <property type="term" value="C:external side of plasma membrane"/>
    <property type="evidence" value="ECO:0000304"/>
    <property type="project" value="PomBase"/>
</dbReference>
<dbReference type="GO" id="GO:0009277">
    <property type="term" value="C:fungal-type cell wall"/>
    <property type="evidence" value="ECO:0000314"/>
    <property type="project" value="PomBase"/>
</dbReference>
<dbReference type="GO" id="GO:0000139">
    <property type="term" value="C:Golgi membrane"/>
    <property type="evidence" value="ECO:0007669"/>
    <property type="project" value="UniProtKB-SubCell"/>
</dbReference>
<dbReference type="InterPro" id="IPR052479">
    <property type="entry name" value="GPI-anchor_Adhesion_Reg"/>
</dbReference>
<dbReference type="InterPro" id="IPR018466">
    <property type="entry name" value="Kre9/Knh1-like_N"/>
</dbReference>
<dbReference type="PANTHER" id="PTHR35185">
    <property type="entry name" value="SERINE/THREONINE-RICH PROTEIN ADG2-RELATED"/>
    <property type="match status" value="1"/>
</dbReference>
<dbReference type="PANTHER" id="PTHR35185:SF1">
    <property type="entry name" value="UPF0619 GPI-ANCHORED MEMBRANE PROTEIN C1322.10"/>
    <property type="match status" value="1"/>
</dbReference>
<dbReference type="Pfam" id="PF10342">
    <property type="entry name" value="Kre9_KNH"/>
    <property type="match status" value="1"/>
</dbReference>
<organism>
    <name type="scientific">Schizosaccharomyces pombe (strain 972 / ATCC 24843)</name>
    <name type="common">Fission yeast</name>
    <dbReference type="NCBI Taxonomy" id="284812"/>
    <lineage>
        <taxon>Eukaryota</taxon>
        <taxon>Fungi</taxon>
        <taxon>Dikarya</taxon>
        <taxon>Ascomycota</taxon>
        <taxon>Taphrinomycotina</taxon>
        <taxon>Schizosaccharomycetes</taxon>
        <taxon>Schizosaccharomycetales</taxon>
        <taxon>Schizosaccharomycetaceae</taxon>
        <taxon>Schizosaccharomyces</taxon>
    </lineage>
</organism>
<feature type="signal peptide" evidence="1">
    <location>
        <begin position="1"/>
        <end position="20"/>
    </location>
</feature>
<feature type="chain" id="PRO_0000343214" description="UPF0619 GPI-anchored membrane protein C1322.10">
    <location>
        <begin position="21"/>
        <end position="242"/>
    </location>
</feature>
<feature type="propeptide" id="PRO_0000343215" description="Removed in mature form" evidence="1">
    <location>
        <begin position="243"/>
        <end position="262"/>
    </location>
</feature>
<feature type="region of interest" description="Disordered" evidence="2">
    <location>
        <begin position="136"/>
        <end position="165"/>
    </location>
</feature>
<feature type="region of interest" description="Disordered" evidence="2">
    <location>
        <begin position="175"/>
        <end position="194"/>
    </location>
</feature>
<feature type="lipid moiety-binding region" description="GPI-like-anchor amidated asparagine" evidence="1">
    <location>
        <position position="242"/>
    </location>
</feature>
<feature type="glycosylation site" description="N-linked (GlcNAc...) asparagine" evidence="1">
    <location>
        <position position="207"/>
    </location>
</feature>
<feature type="glycosylation site" description="N-linked (GlcNAc...) asparagine" evidence="1">
    <location>
        <position position="227"/>
    </location>
</feature>
<evidence type="ECO:0000255" key="1"/>
<evidence type="ECO:0000256" key="2">
    <source>
        <dbReference type="SAM" id="MobiDB-lite"/>
    </source>
</evidence>
<evidence type="ECO:0000305" key="3"/>